<accession>A3N3J9</accession>
<protein>
    <recommendedName>
        <fullName evidence="1">Chaperone protein DnaJ</fullName>
    </recommendedName>
</protein>
<organism>
    <name type="scientific">Actinobacillus pleuropneumoniae serotype 5b (strain L20)</name>
    <dbReference type="NCBI Taxonomy" id="416269"/>
    <lineage>
        <taxon>Bacteria</taxon>
        <taxon>Pseudomonadati</taxon>
        <taxon>Pseudomonadota</taxon>
        <taxon>Gammaproteobacteria</taxon>
        <taxon>Pasteurellales</taxon>
        <taxon>Pasteurellaceae</taxon>
        <taxon>Actinobacillus</taxon>
    </lineage>
</organism>
<proteinExistence type="inferred from homology"/>
<reference key="1">
    <citation type="journal article" date="2008" name="J. Bacteriol.">
        <title>The complete genome sequence of Actinobacillus pleuropneumoniae L20 (serotype 5b).</title>
        <authorList>
            <person name="Foote S.J."/>
            <person name="Bosse J.T."/>
            <person name="Bouevitch A.B."/>
            <person name="Langford P.R."/>
            <person name="Young N.M."/>
            <person name="Nash J.H.E."/>
        </authorList>
    </citation>
    <scope>NUCLEOTIDE SEQUENCE [LARGE SCALE GENOMIC DNA]</scope>
    <source>
        <strain>L20</strain>
    </source>
</reference>
<gene>
    <name evidence="1" type="primary">dnaJ</name>
    <name type="ordered locus">APL_1905</name>
</gene>
<keyword id="KW-0143">Chaperone</keyword>
<keyword id="KW-0963">Cytoplasm</keyword>
<keyword id="KW-0235">DNA replication</keyword>
<keyword id="KW-0479">Metal-binding</keyword>
<keyword id="KW-1185">Reference proteome</keyword>
<keyword id="KW-0677">Repeat</keyword>
<keyword id="KW-0346">Stress response</keyword>
<keyword id="KW-0862">Zinc</keyword>
<keyword id="KW-0863">Zinc-finger</keyword>
<comment type="function">
    <text evidence="1">Participates actively in the response to hyperosmotic and heat shock by preventing the aggregation of stress-denatured proteins and by disaggregating proteins, also in an autonomous, DnaK-independent fashion. Unfolded proteins bind initially to DnaJ; upon interaction with the DnaJ-bound protein, DnaK hydrolyzes its bound ATP, resulting in the formation of a stable complex. GrpE releases ADP from DnaK; ATP binding to DnaK triggers the release of the substrate protein, thus completing the reaction cycle. Several rounds of ATP-dependent interactions between DnaJ, DnaK and GrpE are required for fully efficient folding. Also involved, together with DnaK and GrpE, in the DNA replication of plasmids through activation of initiation proteins.</text>
</comment>
<comment type="cofactor">
    <cofactor evidence="1">
        <name>Zn(2+)</name>
        <dbReference type="ChEBI" id="CHEBI:29105"/>
    </cofactor>
    <text evidence="1">Binds 2 Zn(2+) ions per monomer.</text>
</comment>
<comment type="subunit">
    <text evidence="1">Homodimer.</text>
</comment>
<comment type="subcellular location">
    <subcellularLocation>
        <location evidence="1">Cytoplasm</location>
    </subcellularLocation>
</comment>
<comment type="domain">
    <text evidence="1">The J domain is necessary and sufficient to stimulate DnaK ATPase activity. Zinc center 1 plays an important role in the autonomous, DnaK-independent chaperone activity of DnaJ. Zinc center 2 is essential for interaction with DnaK and for DnaJ activity.</text>
</comment>
<comment type="similarity">
    <text evidence="1">Belongs to the DnaJ family.</text>
</comment>
<dbReference type="EMBL" id="CP000569">
    <property type="protein sequence ID" value="ABN74985.1"/>
    <property type="molecule type" value="Genomic_DNA"/>
</dbReference>
<dbReference type="RefSeq" id="WP_009875184.1">
    <property type="nucleotide sequence ID" value="NC_009053.1"/>
</dbReference>
<dbReference type="SMR" id="A3N3J9"/>
<dbReference type="STRING" id="416269.APL_1905"/>
<dbReference type="EnsemblBacteria" id="ABN74985">
    <property type="protein sequence ID" value="ABN74985"/>
    <property type="gene ID" value="APL_1905"/>
</dbReference>
<dbReference type="KEGG" id="apl:APL_1905"/>
<dbReference type="PATRIC" id="fig|416269.6.peg.1984"/>
<dbReference type="eggNOG" id="COG0484">
    <property type="taxonomic scope" value="Bacteria"/>
</dbReference>
<dbReference type="HOGENOM" id="CLU_017633_0_7_6"/>
<dbReference type="Proteomes" id="UP000001432">
    <property type="component" value="Chromosome"/>
</dbReference>
<dbReference type="GO" id="GO:0005737">
    <property type="term" value="C:cytoplasm"/>
    <property type="evidence" value="ECO:0007669"/>
    <property type="project" value="UniProtKB-SubCell"/>
</dbReference>
<dbReference type="GO" id="GO:0005524">
    <property type="term" value="F:ATP binding"/>
    <property type="evidence" value="ECO:0007669"/>
    <property type="project" value="InterPro"/>
</dbReference>
<dbReference type="GO" id="GO:0031072">
    <property type="term" value="F:heat shock protein binding"/>
    <property type="evidence" value="ECO:0007669"/>
    <property type="project" value="InterPro"/>
</dbReference>
<dbReference type="GO" id="GO:0051082">
    <property type="term" value="F:unfolded protein binding"/>
    <property type="evidence" value="ECO:0007669"/>
    <property type="project" value="UniProtKB-UniRule"/>
</dbReference>
<dbReference type="GO" id="GO:0008270">
    <property type="term" value="F:zinc ion binding"/>
    <property type="evidence" value="ECO:0007669"/>
    <property type="project" value="UniProtKB-UniRule"/>
</dbReference>
<dbReference type="GO" id="GO:0051085">
    <property type="term" value="P:chaperone cofactor-dependent protein refolding"/>
    <property type="evidence" value="ECO:0007669"/>
    <property type="project" value="TreeGrafter"/>
</dbReference>
<dbReference type="GO" id="GO:0006260">
    <property type="term" value="P:DNA replication"/>
    <property type="evidence" value="ECO:0007669"/>
    <property type="project" value="UniProtKB-KW"/>
</dbReference>
<dbReference type="GO" id="GO:0042026">
    <property type="term" value="P:protein refolding"/>
    <property type="evidence" value="ECO:0007669"/>
    <property type="project" value="TreeGrafter"/>
</dbReference>
<dbReference type="GO" id="GO:0009408">
    <property type="term" value="P:response to heat"/>
    <property type="evidence" value="ECO:0007669"/>
    <property type="project" value="InterPro"/>
</dbReference>
<dbReference type="CDD" id="cd06257">
    <property type="entry name" value="DnaJ"/>
    <property type="match status" value="1"/>
</dbReference>
<dbReference type="CDD" id="cd10747">
    <property type="entry name" value="DnaJ_C"/>
    <property type="match status" value="1"/>
</dbReference>
<dbReference type="CDD" id="cd10719">
    <property type="entry name" value="DnaJ_zf"/>
    <property type="match status" value="1"/>
</dbReference>
<dbReference type="FunFam" id="1.10.287.110:FF:000031">
    <property type="entry name" value="Molecular chaperone DnaJ"/>
    <property type="match status" value="1"/>
</dbReference>
<dbReference type="FunFam" id="2.10.230.10:FF:000002">
    <property type="entry name" value="Molecular chaperone DnaJ"/>
    <property type="match status" value="1"/>
</dbReference>
<dbReference type="FunFam" id="2.60.260.20:FF:000004">
    <property type="entry name" value="Molecular chaperone DnaJ"/>
    <property type="match status" value="1"/>
</dbReference>
<dbReference type="Gene3D" id="1.10.287.110">
    <property type="entry name" value="DnaJ domain"/>
    <property type="match status" value="1"/>
</dbReference>
<dbReference type="Gene3D" id="2.10.230.10">
    <property type="entry name" value="Heat shock protein DnaJ, cysteine-rich domain"/>
    <property type="match status" value="1"/>
</dbReference>
<dbReference type="Gene3D" id="2.60.260.20">
    <property type="entry name" value="Urease metallochaperone UreE, N-terminal domain"/>
    <property type="match status" value="2"/>
</dbReference>
<dbReference type="HAMAP" id="MF_01152">
    <property type="entry name" value="DnaJ"/>
    <property type="match status" value="1"/>
</dbReference>
<dbReference type="InterPro" id="IPR012724">
    <property type="entry name" value="DnaJ"/>
</dbReference>
<dbReference type="InterPro" id="IPR002939">
    <property type="entry name" value="DnaJ_C"/>
</dbReference>
<dbReference type="InterPro" id="IPR001623">
    <property type="entry name" value="DnaJ_domain"/>
</dbReference>
<dbReference type="InterPro" id="IPR018253">
    <property type="entry name" value="DnaJ_domain_CS"/>
</dbReference>
<dbReference type="InterPro" id="IPR008971">
    <property type="entry name" value="HSP40/DnaJ_pept-bd"/>
</dbReference>
<dbReference type="InterPro" id="IPR001305">
    <property type="entry name" value="HSP_DnaJ_Cys-rich_dom"/>
</dbReference>
<dbReference type="InterPro" id="IPR036410">
    <property type="entry name" value="HSP_DnaJ_Cys-rich_dom_sf"/>
</dbReference>
<dbReference type="InterPro" id="IPR036869">
    <property type="entry name" value="J_dom_sf"/>
</dbReference>
<dbReference type="NCBIfam" id="TIGR02349">
    <property type="entry name" value="DnaJ_bact"/>
    <property type="match status" value="1"/>
</dbReference>
<dbReference type="NCBIfam" id="NF008035">
    <property type="entry name" value="PRK10767.1"/>
    <property type="match status" value="1"/>
</dbReference>
<dbReference type="PANTHER" id="PTHR43096:SF48">
    <property type="entry name" value="CHAPERONE PROTEIN DNAJ"/>
    <property type="match status" value="1"/>
</dbReference>
<dbReference type="PANTHER" id="PTHR43096">
    <property type="entry name" value="DNAJ HOMOLOG 1, MITOCHONDRIAL-RELATED"/>
    <property type="match status" value="1"/>
</dbReference>
<dbReference type="Pfam" id="PF00226">
    <property type="entry name" value="DnaJ"/>
    <property type="match status" value="1"/>
</dbReference>
<dbReference type="Pfam" id="PF01556">
    <property type="entry name" value="DnaJ_C"/>
    <property type="match status" value="1"/>
</dbReference>
<dbReference type="Pfam" id="PF00684">
    <property type="entry name" value="DnaJ_CXXCXGXG"/>
    <property type="match status" value="1"/>
</dbReference>
<dbReference type="PRINTS" id="PR00625">
    <property type="entry name" value="JDOMAIN"/>
</dbReference>
<dbReference type="SMART" id="SM00271">
    <property type="entry name" value="DnaJ"/>
    <property type="match status" value="1"/>
</dbReference>
<dbReference type="SUPFAM" id="SSF46565">
    <property type="entry name" value="Chaperone J-domain"/>
    <property type="match status" value="1"/>
</dbReference>
<dbReference type="SUPFAM" id="SSF57938">
    <property type="entry name" value="DnaJ/Hsp40 cysteine-rich domain"/>
    <property type="match status" value="1"/>
</dbReference>
<dbReference type="SUPFAM" id="SSF49493">
    <property type="entry name" value="HSP40/DnaJ peptide-binding domain"/>
    <property type="match status" value="2"/>
</dbReference>
<dbReference type="PROSITE" id="PS00636">
    <property type="entry name" value="DNAJ_1"/>
    <property type="match status" value="1"/>
</dbReference>
<dbReference type="PROSITE" id="PS50076">
    <property type="entry name" value="DNAJ_2"/>
    <property type="match status" value="1"/>
</dbReference>
<dbReference type="PROSITE" id="PS51188">
    <property type="entry name" value="ZF_CR"/>
    <property type="match status" value="1"/>
</dbReference>
<feature type="chain" id="PRO_1000085134" description="Chaperone protein DnaJ">
    <location>
        <begin position="1"/>
        <end position="380"/>
    </location>
</feature>
<feature type="domain" description="J" evidence="1">
    <location>
        <begin position="5"/>
        <end position="70"/>
    </location>
</feature>
<feature type="repeat" description="CXXCXGXG motif">
    <location>
        <begin position="149"/>
        <end position="156"/>
    </location>
</feature>
<feature type="repeat" description="CXXCXGXG motif">
    <location>
        <begin position="166"/>
        <end position="173"/>
    </location>
</feature>
<feature type="repeat" description="CXXCXGXG motif">
    <location>
        <begin position="188"/>
        <end position="195"/>
    </location>
</feature>
<feature type="repeat" description="CXXCXGXG motif">
    <location>
        <begin position="202"/>
        <end position="209"/>
    </location>
</feature>
<feature type="zinc finger region" description="CR-type" evidence="1">
    <location>
        <begin position="136"/>
        <end position="214"/>
    </location>
</feature>
<feature type="binding site" evidence="1">
    <location>
        <position position="149"/>
    </location>
    <ligand>
        <name>Zn(2+)</name>
        <dbReference type="ChEBI" id="CHEBI:29105"/>
        <label>1</label>
    </ligand>
</feature>
<feature type="binding site" evidence="1">
    <location>
        <position position="152"/>
    </location>
    <ligand>
        <name>Zn(2+)</name>
        <dbReference type="ChEBI" id="CHEBI:29105"/>
        <label>1</label>
    </ligand>
</feature>
<feature type="binding site" evidence="1">
    <location>
        <position position="166"/>
    </location>
    <ligand>
        <name>Zn(2+)</name>
        <dbReference type="ChEBI" id="CHEBI:29105"/>
        <label>2</label>
    </ligand>
</feature>
<feature type="binding site" evidence="1">
    <location>
        <position position="169"/>
    </location>
    <ligand>
        <name>Zn(2+)</name>
        <dbReference type="ChEBI" id="CHEBI:29105"/>
        <label>2</label>
    </ligand>
</feature>
<feature type="binding site" evidence="1">
    <location>
        <position position="188"/>
    </location>
    <ligand>
        <name>Zn(2+)</name>
        <dbReference type="ChEBI" id="CHEBI:29105"/>
        <label>2</label>
    </ligand>
</feature>
<feature type="binding site" evidence="1">
    <location>
        <position position="191"/>
    </location>
    <ligand>
        <name>Zn(2+)</name>
        <dbReference type="ChEBI" id="CHEBI:29105"/>
        <label>2</label>
    </ligand>
</feature>
<feature type="binding site" evidence="1">
    <location>
        <position position="202"/>
    </location>
    <ligand>
        <name>Zn(2+)</name>
        <dbReference type="ChEBI" id="CHEBI:29105"/>
        <label>1</label>
    </ligand>
</feature>
<feature type="binding site" evidence="1">
    <location>
        <position position="205"/>
    </location>
    <ligand>
        <name>Zn(2+)</name>
        <dbReference type="ChEBI" id="CHEBI:29105"/>
        <label>1</label>
    </ligand>
</feature>
<name>DNAJ_ACTP2</name>
<evidence type="ECO:0000255" key="1">
    <source>
        <dbReference type="HAMAP-Rule" id="MF_01152"/>
    </source>
</evidence>
<sequence length="380" mass="40817">MAKKDYYEVLGLQKGASENDIKRAYKRLASKHHPDKNQGSKDAEEKFKEINEAYEVLGDAEKRAAYDQYGHAAFEQGGGAGGFGGGFGGGGFGGFEDIFSEMFGGGFGGGGRRNHVVRGDDLRYDIEISLEEAVKGCKKDIRISTLAECDTCHGSGAEKGSKVETCSHCHGSGRIRRQQGFFVTEAVCPSCHGSGKKIEKPCKSCHGDGRVQKAKNLSVTIPAGVDTGNQLRLSGEGAAGENGAPAGDLYVVIHVREHDIFERDGSNLYCEVPISFTMAALGGEIEVPTLDGKLKLKIPAETQTGKLFRVRGKGVASPRGGYAGDLICKVVVETPVALNDEQKDLLRKLEESLAGKSKHRPQQESFLDSVKNFFSNLGKH</sequence>